<gene>
    <name type="primary">Sbsn</name>
</gene>
<evidence type="ECO:0000255" key="1"/>
<evidence type="ECO:0000256" key="2">
    <source>
        <dbReference type="SAM" id="MobiDB-lite"/>
    </source>
</evidence>
<evidence type="ECO:0000269" key="3">
    <source>
    </source>
</evidence>
<evidence type="ECO:0000269" key="4">
    <source>
    </source>
</evidence>
<evidence type="ECO:0000303" key="5">
    <source>
    </source>
</evidence>
<evidence type="ECO:0000303" key="6">
    <source>
    </source>
</evidence>
<evidence type="ECO:0000305" key="7"/>
<organism>
    <name type="scientific">Mus musculus</name>
    <name type="common">Mouse</name>
    <dbReference type="NCBI Taxonomy" id="10090"/>
    <lineage>
        <taxon>Eukaryota</taxon>
        <taxon>Metazoa</taxon>
        <taxon>Chordata</taxon>
        <taxon>Craniata</taxon>
        <taxon>Vertebrata</taxon>
        <taxon>Euteleostomi</taxon>
        <taxon>Mammalia</taxon>
        <taxon>Eutheria</taxon>
        <taxon>Euarchontoglires</taxon>
        <taxon>Glires</taxon>
        <taxon>Rodentia</taxon>
        <taxon>Myomorpha</taxon>
        <taxon>Muroidea</taxon>
        <taxon>Muridae</taxon>
        <taxon>Murinae</taxon>
        <taxon>Mus</taxon>
        <taxon>Mus</taxon>
    </lineage>
</organism>
<feature type="signal peptide" evidence="1">
    <location>
        <begin position="1"/>
        <end position="23"/>
    </location>
</feature>
<feature type="chain" id="PRO_0000317121" description="Suprabasin">
    <location>
        <begin position="24"/>
        <end position="700"/>
    </location>
</feature>
<feature type="region of interest" description="Disordered" evidence="2">
    <location>
        <begin position="133"/>
        <end position="158"/>
    </location>
</feature>
<feature type="region of interest" description="Disordered" evidence="2">
    <location>
        <begin position="183"/>
        <end position="258"/>
    </location>
</feature>
<feature type="region of interest" description="Disordered" evidence="2">
    <location>
        <begin position="283"/>
        <end position="391"/>
    </location>
</feature>
<feature type="region of interest" description="Disordered" evidence="2">
    <location>
        <begin position="641"/>
        <end position="669"/>
    </location>
</feature>
<feature type="coiled-coil region" evidence="1">
    <location>
        <begin position="488"/>
        <end position="546"/>
    </location>
</feature>
<feature type="compositionally biased region" description="Polar residues" evidence="2">
    <location>
        <begin position="641"/>
        <end position="654"/>
    </location>
</feature>
<feature type="compositionally biased region" description="Gly residues" evidence="2">
    <location>
        <begin position="658"/>
        <end position="668"/>
    </location>
</feature>
<feature type="splice variant" id="VSP_030902" description="In isoform 3." evidence="5 6">
    <location>
        <begin position="119"/>
        <end position="654"/>
    </location>
</feature>
<feature type="sequence conflict" description="In Ref. 3; AAH51531." evidence="7" ref="3">
    <original>N</original>
    <variation>S</variation>
    <location>
        <position position="96"/>
    </location>
</feature>
<dbReference type="EMBL" id="AY115494">
    <property type="protein sequence ID" value="AAM75407.1"/>
    <property type="molecule type" value="mRNA"/>
</dbReference>
<dbReference type="EMBL" id="AY444556">
    <property type="protein sequence ID" value="AAR20795.1"/>
    <property type="molecule type" value="mRNA"/>
</dbReference>
<dbReference type="EMBL" id="BC051531">
    <property type="protein sequence ID" value="AAH51531.1"/>
    <property type="molecule type" value="mRNA"/>
</dbReference>
<dbReference type="EMBL" id="BC092350">
    <property type="protein sequence ID" value="AAH92350.1"/>
    <property type="molecule type" value="mRNA"/>
</dbReference>
<dbReference type="CCDS" id="CCDS59725.1">
    <molecule id="Q8CIT9-3"/>
</dbReference>
<dbReference type="RefSeq" id="NP_001077372.1">
    <property type="nucleotide sequence ID" value="NM_001083903.1"/>
</dbReference>
<dbReference type="BioGRID" id="235036">
    <property type="interactions" value="4"/>
</dbReference>
<dbReference type="FunCoup" id="Q8CIT9">
    <property type="interactions" value="486"/>
</dbReference>
<dbReference type="STRING" id="10090.ENSMUSP00000079362"/>
<dbReference type="PhosphoSitePlus" id="Q8CIT9"/>
<dbReference type="PaxDb" id="10090-ENSMUSP00000079362"/>
<dbReference type="PeptideAtlas" id="Q8CIT9"/>
<dbReference type="ProteomicsDB" id="255340">
    <molecule id="Q8CIT9-1"/>
</dbReference>
<dbReference type="ProteomicsDB" id="255341">
    <molecule id="Q8CIT9-3"/>
</dbReference>
<dbReference type="Pumba" id="Q8CIT9"/>
<dbReference type="GeneID" id="282619"/>
<dbReference type="KEGG" id="mmu:282619"/>
<dbReference type="UCSC" id="uc009ggf.1">
    <molecule id="Q8CIT9-3"/>
    <property type="organism name" value="mouse"/>
</dbReference>
<dbReference type="AGR" id="MGI:2446326"/>
<dbReference type="CTD" id="374897"/>
<dbReference type="MGI" id="MGI:2446326">
    <property type="gene designation" value="Sbsn"/>
</dbReference>
<dbReference type="eggNOG" id="ENOG502SGZY">
    <property type="taxonomic scope" value="Eukaryota"/>
</dbReference>
<dbReference type="InParanoid" id="Q8CIT9"/>
<dbReference type="OrthoDB" id="9836354at2759"/>
<dbReference type="BioGRID-ORCS" id="282619">
    <property type="hits" value="2 hits in 80 CRISPR screens"/>
</dbReference>
<dbReference type="ChiTaRS" id="Sbsn">
    <property type="organism name" value="mouse"/>
</dbReference>
<dbReference type="PRO" id="PR:Q8CIT9"/>
<dbReference type="Proteomes" id="UP000000589">
    <property type="component" value="Unplaced"/>
</dbReference>
<dbReference type="RNAct" id="Q8CIT9">
    <property type="molecule type" value="protein"/>
</dbReference>
<dbReference type="GO" id="GO:0005737">
    <property type="term" value="C:cytoplasm"/>
    <property type="evidence" value="ECO:0000314"/>
    <property type="project" value="MGI"/>
</dbReference>
<dbReference type="GO" id="GO:0005576">
    <property type="term" value="C:extracellular region"/>
    <property type="evidence" value="ECO:0007669"/>
    <property type="project" value="UniProtKB-SubCell"/>
</dbReference>
<dbReference type="InterPro" id="IPR049502">
    <property type="entry name" value="SBSN_GxHH_rpt"/>
</dbReference>
<dbReference type="InterPro" id="IPR024153">
    <property type="entry name" value="Suprabasin"/>
</dbReference>
<dbReference type="PANTHER" id="PTHR23243">
    <property type="entry name" value="SUPRABASAL-SPECIFIC PROTEIN SUPRABASIN"/>
    <property type="match status" value="1"/>
</dbReference>
<dbReference type="PANTHER" id="PTHR23243:SF3">
    <property type="entry name" value="SUPRABASIN"/>
    <property type="match status" value="1"/>
</dbReference>
<dbReference type="Pfam" id="PF21009">
    <property type="entry name" value="SBSN_GxHH_rpt"/>
    <property type="match status" value="3"/>
</dbReference>
<reference key="1">
    <citation type="journal article" date="2002" name="J. Biol. Chem.">
        <title>Suprabasin, a novel epidermal differentiation marker and potential cornified envelope precursor.</title>
        <authorList>
            <person name="Park G.T."/>
            <person name="Lim S.E."/>
            <person name="Jang S.-I."/>
            <person name="Morasso M.I."/>
        </authorList>
    </citation>
    <scope>NUCLEOTIDE SEQUENCE [MRNA] (ISOFORM 1)</scope>
    <scope>ALTERNATIVE SPLICING</scope>
    <scope>INDUCTION</scope>
    <scope>TISSUE SPECIFICITY</scope>
    <source>
        <strain>129/SvJ</strain>
        <tissue>Keratinocyte</tissue>
    </source>
</reference>
<reference key="2">
    <citation type="journal article" date="2004" name="Gene">
        <title>Identification of a conserved cluster of skin-specific genes encoding secreted proteins.</title>
        <authorList>
            <person name="Moffatt P."/>
            <person name="Salois P."/>
            <person name="St Amant N."/>
            <person name="Gaumond M.-H."/>
            <person name="Lanctot C."/>
        </authorList>
    </citation>
    <scope>NUCLEOTIDE SEQUENCE [MRNA] (ISOFORM 3)</scope>
    <scope>SUBCELLULAR LOCATION</scope>
    <scope>TISSUE SPECIFICITY</scope>
    <source>
        <strain>CD-1</strain>
        <tissue>Embryonic limb</tissue>
        <tissue>Embryonic skin</tissue>
    </source>
</reference>
<reference key="3">
    <citation type="journal article" date="2004" name="Genome Res.">
        <title>The status, quality, and expansion of the NIH full-length cDNA project: the Mammalian Gene Collection (MGC).</title>
        <authorList>
            <consortium name="The MGC Project Team"/>
        </authorList>
    </citation>
    <scope>NUCLEOTIDE SEQUENCE [LARGE SCALE MRNA] (ISOFORM 3)</scope>
    <source>
        <strain>FVB/N-3</strain>
        <tissue>Mammary gland</tissue>
        <tissue>Mammary tumor</tissue>
    </source>
</reference>
<sequence length="700" mass="72334">MYLVSLLSSCCLLVLLGTLPARAAHEDPVEKVIEGFSRGLSNAEREVGKALEGINNGITQAGREVEKIFGELSNMGSQAGKNVEHGLDKVAHDINNGIGHAGKEAEKFAHGVNHAAGQVGKETNKIIHHGVSQGGSEAGKFGQGSHHAFGQGGNVANKLGHETHHAFGQGGNVAHKLGHETHHAFGQGGNVADKLGHGGNVADKLGHGTHHAFGQGGNVADKLGHETHHAFGQGGNVADKLGHGTHHAFGQGGNVADKLGHETHHAFGQGGNVAEKLGHETHHAFGQGGNMADKFGQGAHHAFGQGGNMADKFGQGAHHAFGQGGNMADKFGQGAHHAFGQGGNMADKFGQGAHHAFGQGGNMADKFGQGAHHAFGQGGNMADKFGQGAHHAFGQGRDMAETFDQGAHHAFGQGGREGGRLVQGAGQGLSHAAKEAQQFGHGHGHGYYAAGQTWQEGDKVIHPGVSQAGEEMEQFGQGVRHTIKQAEKEAEKVAHGVQNGVNQAQKEAEKVAHGVQNGVNQAQKEAEKVAHGVQNGVNQAQKEAEKVAHGVQTGVNQAGKETQRVGQGVQTGFNQGQKEAEKVAHGVQTGVNQAGKETQKAGQGVNYAAGQAEKEAEKLGQGVHHAAGQEMNRLQQDVHNGVNQPSKEANQLLNGSHQGQGGYGGQHGGAATTTVVSGASVNKPFINFPALWRSIAATMP</sequence>
<keyword id="KW-0025">Alternative splicing</keyword>
<keyword id="KW-0175">Coiled coil</keyword>
<keyword id="KW-1185">Reference proteome</keyword>
<keyword id="KW-0964">Secreted</keyword>
<keyword id="KW-0732">Signal</keyword>
<proteinExistence type="evidence at transcript level"/>
<comment type="subcellular location">
    <subcellularLocation>
        <location evidence="4">Secreted</location>
    </subcellularLocation>
</comment>
<comment type="alternative products">
    <event type="alternative splicing"/>
    <isoform>
        <id>Q8CIT9-1</id>
        <name>1</name>
        <sequence type="displayed"/>
    </isoform>
    <isoform>
        <id>Q8CIT9-3</id>
        <name>3</name>
        <name>Short</name>
        <sequence type="described" ref="VSP_030902"/>
    </isoform>
</comment>
<comment type="tissue specificity">
    <text evidence="3 4">Detected in epidermis, in suprabasal keratinocytes. Detected in suprabasal layers of embryonic epidermis and in stratified layers of embryonic tongue and palate. Detected in adult stomach.</text>
</comment>
<comment type="developmental stage">
    <text>First detected after 15 days of embryonic development, and highly expressed after 17 days, coinciding with stratification of epidermis.</text>
</comment>
<comment type="induction">
    <text evidence="3">Up-regulated in differentiating keratinocytes.</text>
</comment>
<accession>Q8CIT9</accession>
<accession>Q6SZK0</accession>
<accession>Q80WB4</accession>
<accession>Q8K2V9</accession>
<protein>
    <recommendedName>
        <fullName>Suprabasin</fullName>
    </recommendedName>
</protein>
<name>SBSN_MOUSE</name>